<accession>B0S093</accession>
<evidence type="ECO:0000250" key="1"/>
<evidence type="ECO:0000255" key="2">
    <source>
        <dbReference type="HAMAP-Rule" id="MF_00047"/>
    </source>
</evidence>
<proteinExistence type="inferred from homology"/>
<comment type="function">
    <text evidence="2">Cell wall formation.</text>
</comment>
<comment type="catalytic activity">
    <reaction evidence="2">
        <text>2 D-alanine + ATP = D-alanyl-D-alanine + ADP + phosphate + H(+)</text>
        <dbReference type="Rhea" id="RHEA:11224"/>
        <dbReference type="ChEBI" id="CHEBI:15378"/>
        <dbReference type="ChEBI" id="CHEBI:30616"/>
        <dbReference type="ChEBI" id="CHEBI:43474"/>
        <dbReference type="ChEBI" id="CHEBI:57416"/>
        <dbReference type="ChEBI" id="CHEBI:57822"/>
        <dbReference type="ChEBI" id="CHEBI:456216"/>
        <dbReference type="EC" id="6.3.2.4"/>
    </reaction>
</comment>
<comment type="cofactor">
    <cofactor evidence="1">
        <name>Mg(2+)</name>
        <dbReference type="ChEBI" id="CHEBI:18420"/>
    </cofactor>
    <cofactor evidence="1">
        <name>Mn(2+)</name>
        <dbReference type="ChEBI" id="CHEBI:29035"/>
    </cofactor>
    <text evidence="1">Binds 2 magnesium or manganese ions per subunit.</text>
</comment>
<comment type="pathway">
    <text evidence="2">Cell wall biogenesis; peptidoglycan biosynthesis.</text>
</comment>
<comment type="subcellular location">
    <subcellularLocation>
        <location evidence="2">Cytoplasm</location>
    </subcellularLocation>
</comment>
<comment type="similarity">
    <text evidence="2">Belongs to the D-alanine--D-alanine ligase family.</text>
</comment>
<keyword id="KW-0067">ATP-binding</keyword>
<keyword id="KW-0133">Cell shape</keyword>
<keyword id="KW-0961">Cell wall biogenesis/degradation</keyword>
<keyword id="KW-0963">Cytoplasm</keyword>
<keyword id="KW-0436">Ligase</keyword>
<keyword id="KW-0460">Magnesium</keyword>
<keyword id="KW-0464">Manganese</keyword>
<keyword id="KW-0479">Metal-binding</keyword>
<keyword id="KW-0547">Nucleotide-binding</keyword>
<keyword id="KW-0573">Peptidoglycan synthesis</keyword>
<keyword id="KW-1185">Reference proteome</keyword>
<sequence>MQKNIYVLYGGPSTEHEVSITSARTLINNLSKEKYNVNAIFVRRNKKFIMKENITEEIKSDEELILDTDLSVIESVSECIRKINPENTVIFPAIHGSYGEDGTIQGFIKVLDLPFVGCNVLGSALCMDKGYTNDIFELNKIPQAKYVVLCKNDDYNLKEIFEKTSKAVYVKPCNAGSSVGVMRAETEEELEKAIQNAFQYDRRILVEEEIIGPELQIAVMGNDNPVASRPGVYQIHDVEFFDYDAKYNDSKTEMLTPFPMDEKLELKARHLAEKVYKLMSLSGFSRVDMFVKDNELWVNEINTVPGLTPHSMFPVLWKCTNDMSVSEVFDNLIGLAVEEYKKNKAYKLER</sequence>
<name>DDL_FINM2</name>
<gene>
    <name evidence="2" type="primary">ddl</name>
    <name type="ordered locus">FMG_0263</name>
</gene>
<feature type="chain" id="PRO_0000341091" description="D-alanine--D-alanine ligase">
    <location>
        <begin position="1"/>
        <end position="350"/>
    </location>
</feature>
<feature type="domain" description="ATP-grasp" evidence="2">
    <location>
        <begin position="133"/>
        <end position="334"/>
    </location>
</feature>
<feature type="binding site" evidence="2">
    <location>
        <begin position="161"/>
        <end position="216"/>
    </location>
    <ligand>
        <name>ATP</name>
        <dbReference type="ChEBI" id="CHEBI:30616"/>
    </ligand>
</feature>
<feature type="binding site" evidence="2">
    <location>
        <position position="288"/>
    </location>
    <ligand>
        <name>Mg(2+)</name>
        <dbReference type="ChEBI" id="CHEBI:18420"/>
        <label>1</label>
    </ligand>
</feature>
<feature type="binding site" evidence="2">
    <location>
        <position position="300"/>
    </location>
    <ligand>
        <name>Mg(2+)</name>
        <dbReference type="ChEBI" id="CHEBI:18420"/>
        <label>1</label>
    </ligand>
</feature>
<feature type="binding site" evidence="2">
    <location>
        <position position="300"/>
    </location>
    <ligand>
        <name>Mg(2+)</name>
        <dbReference type="ChEBI" id="CHEBI:18420"/>
        <label>2</label>
    </ligand>
</feature>
<feature type="binding site" evidence="2">
    <location>
        <position position="302"/>
    </location>
    <ligand>
        <name>Mg(2+)</name>
        <dbReference type="ChEBI" id="CHEBI:18420"/>
        <label>2</label>
    </ligand>
</feature>
<protein>
    <recommendedName>
        <fullName evidence="2">D-alanine--D-alanine ligase</fullName>
        <ecNumber evidence="2">6.3.2.4</ecNumber>
    </recommendedName>
    <alternativeName>
        <fullName evidence="2">D-Ala-D-Ala ligase</fullName>
    </alternativeName>
    <alternativeName>
        <fullName evidence="2">D-alanylalanine synthetase</fullName>
    </alternativeName>
</protein>
<dbReference type="EC" id="6.3.2.4" evidence="2"/>
<dbReference type="EMBL" id="AP008971">
    <property type="protein sequence ID" value="BAG07681.1"/>
    <property type="molecule type" value="Genomic_DNA"/>
</dbReference>
<dbReference type="RefSeq" id="WP_012290279.1">
    <property type="nucleotide sequence ID" value="NC_010376.1"/>
</dbReference>
<dbReference type="SMR" id="B0S093"/>
<dbReference type="STRING" id="334413.FMG_0263"/>
<dbReference type="KEGG" id="fma:FMG_0263"/>
<dbReference type="eggNOG" id="COG1181">
    <property type="taxonomic scope" value="Bacteria"/>
</dbReference>
<dbReference type="HOGENOM" id="CLU_039268_1_1_9"/>
<dbReference type="UniPathway" id="UPA00219"/>
<dbReference type="Proteomes" id="UP000001319">
    <property type="component" value="Chromosome"/>
</dbReference>
<dbReference type="GO" id="GO:0005829">
    <property type="term" value="C:cytosol"/>
    <property type="evidence" value="ECO:0007669"/>
    <property type="project" value="TreeGrafter"/>
</dbReference>
<dbReference type="GO" id="GO:0005524">
    <property type="term" value="F:ATP binding"/>
    <property type="evidence" value="ECO:0007669"/>
    <property type="project" value="UniProtKB-KW"/>
</dbReference>
<dbReference type="GO" id="GO:0008716">
    <property type="term" value="F:D-alanine-D-alanine ligase activity"/>
    <property type="evidence" value="ECO:0007669"/>
    <property type="project" value="UniProtKB-UniRule"/>
</dbReference>
<dbReference type="GO" id="GO:0046872">
    <property type="term" value="F:metal ion binding"/>
    <property type="evidence" value="ECO:0007669"/>
    <property type="project" value="UniProtKB-KW"/>
</dbReference>
<dbReference type="GO" id="GO:0071555">
    <property type="term" value="P:cell wall organization"/>
    <property type="evidence" value="ECO:0007669"/>
    <property type="project" value="UniProtKB-KW"/>
</dbReference>
<dbReference type="GO" id="GO:0009252">
    <property type="term" value="P:peptidoglycan biosynthetic process"/>
    <property type="evidence" value="ECO:0007669"/>
    <property type="project" value="UniProtKB-UniRule"/>
</dbReference>
<dbReference type="GO" id="GO:0008360">
    <property type="term" value="P:regulation of cell shape"/>
    <property type="evidence" value="ECO:0007669"/>
    <property type="project" value="UniProtKB-KW"/>
</dbReference>
<dbReference type="Gene3D" id="3.40.50.20">
    <property type="match status" value="1"/>
</dbReference>
<dbReference type="Gene3D" id="3.30.1490.20">
    <property type="entry name" value="ATP-grasp fold, A domain"/>
    <property type="match status" value="1"/>
</dbReference>
<dbReference type="Gene3D" id="3.30.470.20">
    <property type="entry name" value="ATP-grasp fold, B domain"/>
    <property type="match status" value="1"/>
</dbReference>
<dbReference type="HAMAP" id="MF_00047">
    <property type="entry name" value="Dala_Dala_lig"/>
    <property type="match status" value="1"/>
</dbReference>
<dbReference type="InterPro" id="IPR011761">
    <property type="entry name" value="ATP-grasp"/>
</dbReference>
<dbReference type="InterPro" id="IPR013815">
    <property type="entry name" value="ATP_grasp_subdomain_1"/>
</dbReference>
<dbReference type="InterPro" id="IPR000291">
    <property type="entry name" value="D-Ala_lig_Van_CS"/>
</dbReference>
<dbReference type="InterPro" id="IPR005905">
    <property type="entry name" value="D_ala_D_ala"/>
</dbReference>
<dbReference type="InterPro" id="IPR011095">
    <property type="entry name" value="Dala_Dala_lig_C"/>
</dbReference>
<dbReference type="InterPro" id="IPR011127">
    <property type="entry name" value="Dala_Dala_lig_N"/>
</dbReference>
<dbReference type="InterPro" id="IPR016185">
    <property type="entry name" value="PreATP-grasp_dom_sf"/>
</dbReference>
<dbReference type="NCBIfam" id="TIGR01205">
    <property type="entry name" value="D_ala_D_alaTIGR"/>
    <property type="match status" value="1"/>
</dbReference>
<dbReference type="NCBIfam" id="NF002528">
    <property type="entry name" value="PRK01966.1-4"/>
    <property type="match status" value="1"/>
</dbReference>
<dbReference type="PANTHER" id="PTHR23132">
    <property type="entry name" value="D-ALANINE--D-ALANINE LIGASE"/>
    <property type="match status" value="1"/>
</dbReference>
<dbReference type="PANTHER" id="PTHR23132:SF25">
    <property type="entry name" value="D-ALANINE--D-ALANINE LIGASE A"/>
    <property type="match status" value="1"/>
</dbReference>
<dbReference type="Pfam" id="PF07478">
    <property type="entry name" value="Dala_Dala_lig_C"/>
    <property type="match status" value="1"/>
</dbReference>
<dbReference type="Pfam" id="PF01820">
    <property type="entry name" value="Dala_Dala_lig_N"/>
    <property type="match status" value="1"/>
</dbReference>
<dbReference type="PIRSF" id="PIRSF039102">
    <property type="entry name" value="Ddl/VanB"/>
    <property type="match status" value="1"/>
</dbReference>
<dbReference type="SUPFAM" id="SSF56059">
    <property type="entry name" value="Glutathione synthetase ATP-binding domain-like"/>
    <property type="match status" value="1"/>
</dbReference>
<dbReference type="SUPFAM" id="SSF52440">
    <property type="entry name" value="PreATP-grasp domain"/>
    <property type="match status" value="1"/>
</dbReference>
<dbReference type="PROSITE" id="PS50975">
    <property type="entry name" value="ATP_GRASP"/>
    <property type="match status" value="1"/>
</dbReference>
<dbReference type="PROSITE" id="PS00843">
    <property type="entry name" value="DALA_DALA_LIGASE_1"/>
    <property type="match status" value="1"/>
</dbReference>
<dbReference type="PROSITE" id="PS00844">
    <property type="entry name" value="DALA_DALA_LIGASE_2"/>
    <property type="match status" value="1"/>
</dbReference>
<organism>
    <name type="scientific">Finegoldia magna (strain ATCC 29328 / DSM 20472 / WAL 2508)</name>
    <name type="common">Peptostreptococcus magnus</name>
    <dbReference type="NCBI Taxonomy" id="334413"/>
    <lineage>
        <taxon>Bacteria</taxon>
        <taxon>Bacillati</taxon>
        <taxon>Bacillota</taxon>
        <taxon>Tissierellia</taxon>
        <taxon>Tissierellales</taxon>
        <taxon>Peptoniphilaceae</taxon>
        <taxon>Finegoldia</taxon>
    </lineage>
</organism>
<reference key="1">
    <citation type="journal article" date="2008" name="DNA Res.">
        <title>Complete genome sequence of Finegoldia magna, an anaerobic opportunistic pathogen.</title>
        <authorList>
            <person name="Goto T."/>
            <person name="Yamashita A."/>
            <person name="Hirakawa H."/>
            <person name="Matsutani M."/>
            <person name="Todo K."/>
            <person name="Ohshima K."/>
            <person name="Toh H."/>
            <person name="Miyamoto K."/>
            <person name="Kuhara S."/>
            <person name="Hattori M."/>
            <person name="Shimizu T."/>
            <person name="Akimoto S."/>
        </authorList>
    </citation>
    <scope>NUCLEOTIDE SEQUENCE [LARGE SCALE GENOMIC DNA]</scope>
    <source>
        <strain>ATCC 29328 / DSM 20472 / WAL 2508</strain>
    </source>
</reference>